<proteinExistence type="inferred from homology"/>
<reference key="1">
    <citation type="submission" date="1998-02" db="EMBL/GenBank/DDBJ databases">
        <title>MIF protein levels change during Brugia malayi infections in the gerbil.</title>
        <authorList>
            <person name="Marson A."/>
            <person name="Pastrana D."/>
            <person name="Raghavan N."/>
            <person name="Scott A.L."/>
        </authorList>
    </citation>
    <scope>NUCLEOTIDE SEQUENCE [MRNA]</scope>
</reference>
<feature type="initiator methionine" description="Removed" evidence="1">
    <location>
        <position position="1"/>
    </location>
</feature>
<feature type="chain" id="PRO_0000158065" description="Macrophage migration inhibitory factor">
    <location>
        <begin position="2"/>
        <end position="115"/>
    </location>
</feature>
<feature type="active site" description="Proton acceptor; via imino nitrogen" evidence="2">
    <location>
        <position position="2"/>
    </location>
</feature>
<feature type="binding site" evidence="1">
    <location>
        <position position="33"/>
    </location>
    <ligand>
        <name>substrate</name>
    </ligand>
</feature>
<feature type="binding site" evidence="1">
    <location>
        <position position="65"/>
    </location>
    <ligand>
        <name>substrate</name>
    </ligand>
</feature>
<feature type="binding site" evidence="1">
    <location>
        <position position="98"/>
    </location>
    <ligand>
        <name>substrate</name>
    </ligand>
</feature>
<feature type="modified residue" description="N6-acetyllysine; alternate" evidence="1">
    <location>
        <position position="78"/>
    </location>
</feature>
<feature type="modified residue" description="N6-succinyllysine; alternate" evidence="2">
    <location>
        <position position="78"/>
    </location>
</feature>
<protein>
    <recommendedName>
        <fullName>Macrophage migration inhibitory factor</fullName>
        <shortName>MIF</shortName>
        <ecNumber evidence="1">5.3.2.1</ecNumber>
    </recommendedName>
    <alternativeName>
        <fullName>L-dopachrome isomerase</fullName>
    </alternativeName>
    <alternativeName>
        <fullName>L-dopachrome tautomerase</fullName>
        <ecNumber evidence="1">5.3.3.12</ecNumber>
    </alternativeName>
    <alternativeName>
        <fullName>Phenylpyruvate tautomerase</fullName>
    </alternativeName>
</protein>
<name>MIF_MERUN</name>
<accession>O55052</accession>
<gene>
    <name type="primary">MIF</name>
</gene>
<sequence>MPMFIVNTNVPRSSVPEGLLSELTQQLAQATGKPAQYIAVHVVPDQLMTFSGSSDPCALCSLHSIGKIGGAQNRTYSKLLCGLLADRLRISPDRIYINYYDMNAANVGWNGSTFA</sequence>
<organism>
    <name type="scientific">Meriones unguiculatus</name>
    <name type="common">Mongolian jird</name>
    <name type="synonym">Gerbillus unguiculatus</name>
    <dbReference type="NCBI Taxonomy" id="10047"/>
    <lineage>
        <taxon>Eukaryota</taxon>
        <taxon>Metazoa</taxon>
        <taxon>Chordata</taxon>
        <taxon>Craniata</taxon>
        <taxon>Vertebrata</taxon>
        <taxon>Euteleostomi</taxon>
        <taxon>Mammalia</taxon>
        <taxon>Eutheria</taxon>
        <taxon>Euarchontoglires</taxon>
        <taxon>Glires</taxon>
        <taxon>Rodentia</taxon>
        <taxon>Myomorpha</taxon>
        <taxon>Muroidea</taxon>
        <taxon>Muridae</taxon>
        <taxon>Gerbillinae</taxon>
        <taxon>Meriones</taxon>
    </lineage>
</organism>
<keyword id="KW-0007">Acetylation</keyword>
<keyword id="KW-0202">Cytokine</keyword>
<keyword id="KW-0963">Cytoplasm</keyword>
<keyword id="KW-0391">Immunity</keyword>
<keyword id="KW-0395">Inflammatory response</keyword>
<keyword id="KW-0399">Innate immunity</keyword>
<keyword id="KW-0413">Isomerase</keyword>
<keyword id="KW-0964">Secreted</keyword>
<comment type="function">
    <text evidence="1">Pro-inflammatory cytokine involved in the innate immune response to bacterial pathogens. The expression of MIF at sites of inflammation suggests a role as mediator in regulating the function of macrophages in host defense. Counteracts the anti-inflammatory activity of glucocorticoids. Has phenylpyruvate tautomerase and dopachrome tautomerase activity (in vitro), but the physiological substrate is not known. It is not clear whether the tautomerase activity has any physiological relevance, and whether it is important for cytokine activity.</text>
</comment>
<comment type="catalytic activity">
    <reaction evidence="1">
        <text>3-phenylpyruvate = enol-phenylpyruvate</text>
        <dbReference type="Rhea" id="RHEA:17097"/>
        <dbReference type="ChEBI" id="CHEBI:16815"/>
        <dbReference type="ChEBI" id="CHEBI:18005"/>
        <dbReference type="EC" id="5.3.2.1"/>
    </reaction>
</comment>
<comment type="catalytic activity">
    <reaction evidence="1">
        <text>L-dopachrome = 5,6-dihydroxyindole-2-carboxylate</text>
        <dbReference type="Rhea" id="RHEA:13041"/>
        <dbReference type="ChEBI" id="CHEBI:16875"/>
        <dbReference type="ChEBI" id="CHEBI:57509"/>
        <dbReference type="EC" id="5.3.3.12"/>
    </reaction>
</comment>
<comment type="subunit">
    <text evidence="1 2">Homotrimer (By similarity). Interacts with CXCR2 extracellular domain (By similarity). Interacts with the CD74 extracellular domain, USO1, COPS5 and BNIPL (By similarity).</text>
</comment>
<comment type="subcellular location">
    <subcellularLocation>
        <location evidence="1">Secreted</location>
    </subcellularLocation>
    <subcellularLocation>
        <location evidence="1">Cytoplasm</location>
    </subcellularLocation>
    <text evidence="1">Does not have a cleavable signal sequence and is secreted via a specialized, non-classical pathway. Secreted by macrophages upon stimulation by bacterial lipopolysaccharide (LPS), or by M.tuberculosis antigens.</text>
</comment>
<comment type="similarity">
    <text evidence="3">Belongs to the MIF family.</text>
</comment>
<evidence type="ECO:0000250" key="1">
    <source>
        <dbReference type="UniProtKB" id="P14174"/>
    </source>
</evidence>
<evidence type="ECO:0000250" key="2">
    <source>
        <dbReference type="UniProtKB" id="P34884"/>
    </source>
</evidence>
<evidence type="ECO:0000305" key="3"/>
<dbReference type="EC" id="5.3.2.1" evidence="1"/>
<dbReference type="EC" id="5.3.3.12" evidence="1"/>
<dbReference type="EMBL" id="AF045740">
    <property type="protein sequence ID" value="AAC02629.1"/>
    <property type="molecule type" value="mRNA"/>
</dbReference>
<dbReference type="SMR" id="O55052"/>
<dbReference type="GO" id="GO:0005737">
    <property type="term" value="C:cytoplasm"/>
    <property type="evidence" value="ECO:0007669"/>
    <property type="project" value="UniProtKB-SubCell"/>
</dbReference>
<dbReference type="GO" id="GO:0005615">
    <property type="term" value="C:extracellular space"/>
    <property type="evidence" value="ECO:0007669"/>
    <property type="project" value="UniProtKB-KW"/>
</dbReference>
<dbReference type="GO" id="GO:0005125">
    <property type="term" value="F:cytokine activity"/>
    <property type="evidence" value="ECO:0007669"/>
    <property type="project" value="UniProtKB-KW"/>
</dbReference>
<dbReference type="GO" id="GO:0004167">
    <property type="term" value="F:dopachrome isomerase activity"/>
    <property type="evidence" value="ECO:0000250"/>
    <property type="project" value="UniProtKB"/>
</dbReference>
<dbReference type="GO" id="GO:0050178">
    <property type="term" value="F:phenylpyruvate tautomerase activity"/>
    <property type="evidence" value="ECO:0007669"/>
    <property type="project" value="UniProtKB-EC"/>
</dbReference>
<dbReference type="GO" id="GO:0006954">
    <property type="term" value="P:inflammatory response"/>
    <property type="evidence" value="ECO:0007669"/>
    <property type="project" value="UniProtKB-KW"/>
</dbReference>
<dbReference type="GO" id="GO:0045087">
    <property type="term" value="P:innate immune response"/>
    <property type="evidence" value="ECO:0007669"/>
    <property type="project" value="UniProtKB-KW"/>
</dbReference>
<dbReference type="FunFam" id="3.30.429.10:FF:000001">
    <property type="entry name" value="Macrophage migration inhibitory factor"/>
    <property type="match status" value="1"/>
</dbReference>
<dbReference type="Gene3D" id="3.30.429.10">
    <property type="entry name" value="Macrophage Migration Inhibitory Factor"/>
    <property type="match status" value="1"/>
</dbReference>
<dbReference type="InterPro" id="IPR001398">
    <property type="entry name" value="Macrophage_inhib_fac"/>
</dbReference>
<dbReference type="InterPro" id="IPR019829">
    <property type="entry name" value="Macrophage_inhib_fac_CS"/>
</dbReference>
<dbReference type="InterPro" id="IPR014347">
    <property type="entry name" value="Tautomerase/MIF_sf"/>
</dbReference>
<dbReference type="PANTHER" id="PTHR11954">
    <property type="entry name" value="D-DOPACHROME DECARBOXYLASE"/>
    <property type="match status" value="1"/>
</dbReference>
<dbReference type="PANTHER" id="PTHR11954:SF6">
    <property type="entry name" value="MACROPHAGE MIGRATION INHIBITORY FACTOR"/>
    <property type="match status" value="1"/>
</dbReference>
<dbReference type="Pfam" id="PF01187">
    <property type="entry name" value="MIF"/>
    <property type="match status" value="1"/>
</dbReference>
<dbReference type="SUPFAM" id="SSF55331">
    <property type="entry name" value="Tautomerase/MIF"/>
    <property type="match status" value="1"/>
</dbReference>
<dbReference type="PROSITE" id="PS01158">
    <property type="entry name" value="MIF"/>
    <property type="match status" value="1"/>
</dbReference>